<comment type="function">
    <text evidence="1">Catalyzes the specific phosphorylation of arginine residues in proteins.</text>
</comment>
<comment type="catalytic activity">
    <reaction evidence="1">
        <text>L-arginyl-[protein] + ATP = N(omega)-phospho-L-arginyl-[protein] + ADP + H(+)</text>
        <dbReference type="Rhea" id="RHEA:43384"/>
        <dbReference type="Rhea" id="RHEA-COMP:10532"/>
        <dbReference type="Rhea" id="RHEA-COMP:10533"/>
        <dbReference type="ChEBI" id="CHEBI:15378"/>
        <dbReference type="ChEBI" id="CHEBI:29965"/>
        <dbReference type="ChEBI" id="CHEBI:30616"/>
        <dbReference type="ChEBI" id="CHEBI:83226"/>
        <dbReference type="ChEBI" id="CHEBI:456216"/>
        <dbReference type="EC" id="2.7.14.1"/>
    </reaction>
</comment>
<comment type="similarity">
    <text evidence="1">Belongs to the ATP:guanido phosphotransferase family.</text>
</comment>
<sequence>MTHNIHDNISQWMKSNEETPIVMSSRIRLARNLENHVHPLMYATENDGFRVINEVQDALPNFELMRLDQMDQQSKMKMVAKHLISPELIKQPAAAVLVNDDESLSVMINEEDHIRIQAMGTDTTLQALYNQASSIDDELDRSLDISYDEQLGYLTTCPTNIGTGMRASVMLHLPGLSIMKRMTRIAQTINRFGYTIRGIYGEGSQVYGHTYQVSNQLTLGKSELEIIETLTEVVNQIIHDEKQIRQKLDTYNQLETQDRVFRSLGILQNCRMITMEEASYRLSEVKLGIDLNYIELQNFKFNELMVAIQSPFLLDEEDDKSVKEKRADILREHIK</sequence>
<name>MCSB_STAA1</name>
<accession>A7WYT9</accession>
<keyword id="KW-0067">ATP-binding</keyword>
<keyword id="KW-0418">Kinase</keyword>
<keyword id="KW-0547">Nucleotide-binding</keyword>
<keyword id="KW-0808">Transferase</keyword>
<dbReference type="EC" id="2.7.14.1" evidence="1"/>
<dbReference type="EMBL" id="AP009324">
    <property type="protein sequence ID" value="BAF77404.1"/>
    <property type="molecule type" value="Genomic_DNA"/>
</dbReference>
<dbReference type="RefSeq" id="WP_000149502.1">
    <property type="nucleotide sequence ID" value="NC_009782.1"/>
</dbReference>
<dbReference type="SMR" id="A7WYT9"/>
<dbReference type="KEGG" id="saw:SAHV_0521"/>
<dbReference type="HOGENOM" id="CLU_066591_1_0_9"/>
<dbReference type="GO" id="GO:0005615">
    <property type="term" value="C:extracellular space"/>
    <property type="evidence" value="ECO:0007669"/>
    <property type="project" value="TreeGrafter"/>
</dbReference>
<dbReference type="GO" id="GO:0005524">
    <property type="term" value="F:ATP binding"/>
    <property type="evidence" value="ECO:0007669"/>
    <property type="project" value="UniProtKB-KW"/>
</dbReference>
<dbReference type="GO" id="GO:0004111">
    <property type="term" value="F:creatine kinase activity"/>
    <property type="evidence" value="ECO:0007669"/>
    <property type="project" value="InterPro"/>
</dbReference>
<dbReference type="GO" id="GO:0004672">
    <property type="term" value="F:protein kinase activity"/>
    <property type="evidence" value="ECO:0007669"/>
    <property type="project" value="UniProtKB-UniRule"/>
</dbReference>
<dbReference type="GO" id="GO:0046314">
    <property type="term" value="P:phosphocreatine biosynthetic process"/>
    <property type="evidence" value="ECO:0007669"/>
    <property type="project" value="InterPro"/>
</dbReference>
<dbReference type="CDD" id="cd07930">
    <property type="entry name" value="bacterial_phosphagen_kinase"/>
    <property type="match status" value="1"/>
</dbReference>
<dbReference type="FunFam" id="3.30.590.10:FF:000007">
    <property type="entry name" value="Protein-arginine kinase"/>
    <property type="match status" value="1"/>
</dbReference>
<dbReference type="Gene3D" id="3.30.590.10">
    <property type="entry name" value="Glutamine synthetase/guanido kinase, catalytic domain"/>
    <property type="match status" value="1"/>
</dbReference>
<dbReference type="HAMAP" id="MF_00602">
    <property type="entry name" value="Prot_Arg_kinase"/>
    <property type="match status" value="1"/>
</dbReference>
<dbReference type="InterPro" id="IPR023660">
    <property type="entry name" value="Arg_Kinase"/>
</dbReference>
<dbReference type="InterPro" id="IPR000749">
    <property type="entry name" value="ATP-guanido_PTrfase"/>
</dbReference>
<dbReference type="InterPro" id="IPR022415">
    <property type="entry name" value="ATP-guanido_PTrfase_AS"/>
</dbReference>
<dbReference type="InterPro" id="IPR022414">
    <property type="entry name" value="ATP-guanido_PTrfase_cat"/>
</dbReference>
<dbReference type="InterPro" id="IPR014746">
    <property type="entry name" value="Gln_synth/guanido_kin_cat_dom"/>
</dbReference>
<dbReference type="NCBIfam" id="NF002193">
    <property type="entry name" value="PRK01059.1-3"/>
    <property type="match status" value="1"/>
</dbReference>
<dbReference type="PANTHER" id="PTHR11547:SF38">
    <property type="entry name" value="ARGININE KINASE 1-RELATED"/>
    <property type="match status" value="1"/>
</dbReference>
<dbReference type="PANTHER" id="PTHR11547">
    <property type="entry name" value="ARGININE OR CREATINE KINASE"/>
    <property type="match status" value="1"/>
</dbReference>
<dbReference type="Pfam" id="PF00217">
    <property type="entry name" value="ATP-gua_Ptrans"/>
    <property type="match status" value="1"/>
</dbReference>
<dbReference type="SUPFAM" id="SSF55931">
    <property type="entry name" value="Glutamine synthetase/guanido kinase"/>
    <property type="match status" value="1"/>
</dbReference>
<dbReference type="PROSITE" id="PS00112">
    <property type="entry name" value="PHOSPHAGEN_KINASE"/>
    <property type="match status" value="1"/>
</dbReference>
<dbReference type="PROSITE" id="PS51510">
    <property type="entry name" value="PHOSPHAGEN_KINASE_C"/>
    <property type="match status" value="1"/>
</dbReference>
<protein>
    <recommendedName>
        <fullName evidence="1">Protein-arginine kinase</fullName>
        <ecNumber evidence="1">2.7.14.1</ecNumber>
    </recommendedName>
</protein>
<proteinExistence type="inferred from homology"/>
<evidence type="ECO:0000255" key="1">
    <source>
        <dbReference type="HAMAP-Rule" id="MF_00602"/>
    </source>
</evidence>
<gene>
    <name evidence="1" type="primary">mcsB</name>
    <name type="ordered locus">SAHV_0521</name>
</gene>
<reference key="1">
    <citation type="journal article" date="2008" name="Antimicrob. Agents Chemother.">
        <title>Mutated response regulator graR is responsible for phenotypic conversion of Staphylococcus aureus from heterogeneous vancomycin-intermediate resistance to vancomycin-intermediate resistance.</title>
        <authorList>
            <person name="Neoh H.-M."/>
            <person name="Cui L."/>
            <person name="Yuzawa H."/>
            <person name="Takeuchi F."/>
            <person name="Matsuo M."/>
            <person name="Hiramatsu K."/>
        </authorList>
    </citation>
    <scope>NUCLEOTIDE SEQUENCE [LARGE SCALE GENOMIC DNA]</scope>
    <source>
        <strain>Mu3 / ATCC 700698</strain>
    </source>
</reference>
<organism>
    <name type="scientific">Staphylococcus aureus (strain Mu3 / ATCC 700698)</name>
    <dbReference type="NCBI Taxonomy" id="418127"/>
    <lineage>
        <taxon>Bacteria</taxon>
        <taxon>Bacillati</taxon>
        <taxon>Bacillota</taxon>
        <taxon>Bacilli</taxon>
        <taxon>Bacillales</taxon>
        <taxon>Staphylococcaceae</taxon>
        <taxon>Staphylococcus</taxon>
    </lineage>
</organism>
<feature type="chain" id="PRO_1000025877" description="Protein-arginine kinase">
    <location>
        <begin position="1"/>
        <end position="335"/>
    </location>
</feature>
<feature type="domain" description="Phosphagen kinase C-terminal" evidence="1">
    <location>
        <begin position="21"/>
        <end position="244"/>
    </location>
</feature>
<feature type="binding site" evidence="1">
    <location>
        <begin position="24"/>
        <end position="28"/>
    </location>
    <ligand>
        <name>ATP</name>
        <dbReference type="ChEBI" id="CHEBI:30616"/>
    </ligand>
</feature>
<feature type="binding site" evidence="1">
    <location>
        <position position="82"/>
    </location>
    <ligand>
        <name>ATP</name>
        <dbReference type="ChEBI" id="CHEBI:30616"/>
    </ligand>
</feature>
<feature type="binding site" evidence="1">
    <location>
        <position position="115"/>
    </location>
    <ligand>
        <name>ATP</name>
        <dbReference type="ChEBI" id="CHEBI:30616"/>
    </ligand>
</feature>
<feature type="binding site" evidence="1">
    <location>
        <begin position="166"/>
        <end position="170"/>
    </location>
    <ligand>
        <name>ATP</name>
        <dbReference type="ChEBI" id="CHEBI:30616"/>
    </ligand>
</feature>
<feature type="binding site" evidence="1">
    <location>
        <begin position="197"/>
        <end position="202"/>
    </location>
    <ligand>
        <name>ATP</name>
        <dbReference type="ChEBI" id="CHEBI:30616"/>
    </ligand>
</feature>